<gene>
    <name evidence="1" type="primary">fusA2</name>
    <name type="synonym">fusA-2</name>
    <name type="ordered locus">Bd0987</name>
</gene>
<organism>
    <name type="scientific">Bdellovibrio bacteriovorus (strain ATCC 15356 / DSM 50701 / NCIMB 9529 / HD100)</name>
    <dbReference type="NCBI Taxonomy" id="264462"/>
    <lineage>
        <taxon>Bacteria</taxon>
        <taxon>Pseudomonadati</taxon>
        <taxon>Bdellovibrionota</taxon>
        <taxon>Bdellovibrionia</taxon>
        <taxon>Bdellovibrionales</taxon>
        <taxon>Pseudobdellovibrionaceae</taxon>
        <taxon>Bdellovibrio</taxon>
    </lineage>
</organism>
<dbReference type="EMBL" id="BX842648">
    <property type="protein sequence ID" value="CAE78921.1"/>
    <property type="molecule type" value="Genomic_DNA"/>
</dbReference>
<dbReference type="RefSeq" id="WP_011163523.1">
    <property type="nucleotide sequence ID" value="NC_005363.1"/>
</dbReference>
<dbReference type="SMR" id="Q6MP77"/>
<dbReference type="STRING" id="264462.Bd0987"/>
<dbReference type="GeneID" id="93012051"/>
<dbReference type="KEGG" id="bba:Bd0987"/>
<dbReference type="eggNOG" id="COG0480">
    <property type="taxonomic scope" value="Bacteria"/>
</dbReference>
<dbReference type="HOGENOM" id="CLU_002794_4_0_7"/>
<dbReference type="Proteomes" id="UP000008080">
    <property type="component" value="Chromosome"/>
</dbReference>
<dbReference type="GO" id="GO:0005737">
    <property type="term" value="C:cytoplasm"/>
    <property type="evidence" value="ECO:0007669"/>
    <property type="project" value="UniProtKB-SubCell"/>
</dbReference>
<dbReference type="GO" id="GO:0005525">
    <property type="term" value="F:GTP binding"/>
    <property type="evidence" value="ECO:0007669"/>
    <property type="project" value="UniProtKB-UniRule"/>
</dbReference>
<dbReference type="GO" id="GO:0003924">
    <property type="term" value="F:GTPase activity"/>
    <property type="evidence" value="ECO:0007669"/>
    <property type="project" value="InterPro"/>
</dbReference>
<dbReference type="GO" id="GO:0003746">
    <property type="term" value="F:translation elongation factor activity"/>
    <property type="evidence" value="ECO:0007669"/>
    <property type="project" value="UniProtKB-UniRule"/>
</dbReference>
<dbReference type="CDD" id="cd01886">
    <property type="entry name" value="EF-G"/>
    <property type="match status" value="1"/>
</dbReference>
<dbReference type="CDD" id="cd16262">
    <property type="entry name" value="EFG_III"/>
    <property type="match status" value="1"/>
</dbReference>
<dbReference type="CDD" id="cd01434">
    <property type="entry name" value="EFG_mtEFG1_IV"/>
    <property type="match status" value="1"/>
</dbReference>
<dbReference type="CDD" id="cd04097">
    <property type="entry name" value="mtEFG1_C"/>
    <property type="match status" value="1"/>
</dbReference>
<dbReference type="CDD" id="cd04091">
    <property type="entry name" value="mtEFG1_II_like"/>
    <property type="match status" value="1"/>
</dbReference>
<dbReference type="FunFam" id="3.30.230.10:FF:000003">
    <property type="entry name" value="Elongation factor G"/>
    <property type="match status" value="1"/>
</dbReference>
<dbReference type="FunFam" id="3.30.70.240:FF:000001">
    <property type="entry name" value="Elongation factor G"/>
    <property type="match status" value="1"/>
</dbReference>
<dbReference type="FunFam" id="3.30.70.870:FF:000001">
    <property type="entry name" value="Elongation factor G"/>
    <property type="match status" value="1"/>
</dbReference>
<dbReference type="FunFam" id="3.40.50.300:FF:000029">
    <property type="entry name" value="Elongation factor G"/>
    <property type="match status" value="1"/>
</dbReference>
<dbReference type="FunFam" id="2.40.30.10:FF:000022">
    <property type="entry name" value="Elongation factor G, mitochondrial"/>
    <property type="match status" value="1"/>
</dbReference>
<dbReference type="Gene3D" id="3.30.230.10">
    <property type="match status" value="1"/>
</dbReference>
<dbReference type="Gene3D" id="3.30.70.240">
    <property type="match status" value="1"/>
</dbReference>
<dbReference type="Gene3D" id="3.30.70.870">
    <property type="entry name" value="Elongation Factor G (Translational Gtpase), domain 3"/>
    <property type="match status" value="1"/>
</dbReference>
<dbReference type="Gene3D" id="3.40.50.300">
    <property type="entry name" value="P-loop containing nucleotide triphosphate hydrolases"/>
    <property type="match status" value="1"/>
</dbReference>
<dbReference type="Gene3D" id="2.40.30.10">
    <property type="entry name" value="Translation factors"/>
    <property type="match status" value="1"/>
</dbReference>
<dbReference type="HAMAP" id="MF_00054_B">
    <property type="entry name" value="EF_G_EF_2_B"/>
    <property type="match status" value="1"/>
</dbReference>
<dbReference type="InterPro" id="IPR041095">
    <property type="entry name" value="EFG_II"/>
</dbReference>
<dbReference type="InterPro" id="IPR009022">
    <property type="entry name" value="EFG_III"/>
</dbReference>
<dbReference type="InterPro" id="IPR035647">
    <property type="entry name" value="EFG_III/V"/>
</dbReference>
<dbReference type="InterPro" id="IPR047872">
    <property type="entry name" value="EFG_IV"/>
</dbReference>
<dbReference type="InterPro" id="IPR035649">
    <property type="entry name" value="EFG_V"/>
</dbReference>
<dbReference type="InterPro" id="IPR000640">
    <property type="entry name" value="EFG_V-like"/>
</dbReference>
<dbReference type="InterPro" id="IPR004161">
    <property type="entry name" value="EFTu-like_2"/>
</dbReference>
<dbReference type="InterPro" id="IPR031157">
    <property type="entry name" value="G_TR_CS"/>
</dbReference>
<dbReference type="InterPro" id="IPR027417">
    <property type="entry name" value="P-loop_NTPase"/>
</dbReference>
<dbReference type="InterPro" id="IPR020568">
    <property type="entry name" value="Ribosomal_Su5_D2-typ_SF"/>
</dbReference>
<dbReference type="InterPro" id="IPR014721">
    <property type="entry name" value="Ribsml_uS5_D2-typ_fold_subgr"/>
</dbReference>
<dbReference type="InterPro" id="IPR005225">
    <property type="entry name" value="Small_GTP-bd"/>
</dbReference>
<dbReference type="InterPro" id="IPR000795">
    <property type="entry name" value="T_Tr_GTP-bd_dom"/>
</dbReference>
<dbReference type="InterPro" id="IPR009000">
    <property type="entry name" value="Transl_B-barrel_sf"/>
</dbReference>
<dbReference type="InterPro" id="IPR004540">
    <property type="entry name" value="Transl_elong_EFG/EF2"/>
</dbReference>
<dbReference type="InterPro" id="IPR005517">
    <property type="entry name" value="Transl_elong_EFG/EF2_IV"/>
</dbReference>
<dbReference type="NCBIfam" id="TIGR00484">
    <property type="entry name" value="EF-G"/>
    <property type="match status" value="1"/>
</dbReference>
<dbReference type="NCBIfam" id="NF009381">
    <property type="entry name" value="PRK12740.1-5"/>
    <property type="match status" value="1"/>
</dbReference>
<dbReference type="NCBIfam" id="TIGR00231">
    <property type="entry name" value="small_GTP"/>
    <property type="match status" value="1"/>
</dbReference>
<dbReference type="PANTHER" id="PTHR43636">
    <property type="entry name" value="ELONGATION FACTOR G, MITOCHONDRIAL"/>
    <property type="match status" value="1"/>
</dbReference>
<dbReference type="PANTHER" id="PTHR43636:SF2">
    <property type="entry name" value="ELONGATION FACTOR G, MITOCHONDRIAL"/>
    <property type="match status" value="1"/>
</dbReference>
<dbReference type="Pfam" id="PF00679">
    <property type="entry name" value="EFG_C"/>
    <property type="match status" value="1"/>
</dbReference>
<dbReference type="Pfam" id="PF14492">
    <property type="entry name" value="EFG_III"/>
    <property type="match status" value="1"/>
</dbReference>
<dbReference type="Pfam" id="PF03764">
    <property type="entry name" value="EFG_IV"/>
    <property type="match status" value="1"/>
</dbReference>
<dbReference type="Pfam" id="PF00009">
    <property type="entry name" value="GTP_EFTU"/>
    <property type="match status" value="1"/>
</dbReference>
<dbReference type="Pfam" id="PF03144">
    <property type="entry name" value="GTP_EFTU_D2"/>
    <property type="match status" value="1"/>
</dbReference>
<dbReference type="PRINTS" id="PR00315">
    <property type="entry name" value="ELONGATNFCT"/>
</dbReference>
<dbReference type="SMART" id="SM00838">
    <property type="entry name" value="EFG_C"/>
    <property type="match status" value="1"/>
</dbReference>
<dbReference type="SMART" id="SM00889">
    <property type="entry name" value="EFG_IV"/>
    <property type="match status" value="1"/>
</dbReference>
<dbReference type="SUPFAM" id="SSF54980">
    <property type="entry name" value="EF-G C-terminal domain-like"/>
    <property type="match status" value="2"/>
</dbReference>
<dbReference type="SUPFAM" id="SSF52540">
    <property type="entry name" value="P-loop containing nucleoside triphosphate hydrolases"/>
    <property type="match status" value="1"/>
</dbReference>
<dbReference type="SUPFAM" id="SSF54211">
    <property type="entry name" value="Ribosomal protein S5 domain 2-like"/>
    <property type="match status" value="1"/>
</dbReference>
<dbReference type="SUPFAM" id="SSF50447">
    <property type="entry name" value="Translation proteins"/>
    <property type="match status" value="1"/>
</dbReference>
<dbReference type="PROSITE" id="PS00301">
    <property type="entry name" value="G_TR_1"/>
    <property type="match status" value="1"/>
</dbReference>
<dbReference type="PROSITE" id="PS51722">
    <property type="entry name" value="G_TR_2"/>
    <property type="match status" value="1"/>
</dbReference>
<proteinExistence type="inferred from homology"/>
<reference key="1">
    <citation type="journal article" date="2004" name="Science">
        <title>A predator unmasked: life cycle of Bdellovibrio bacteriovorus from a genomic perspective.</title>
        <authorList>
            <person name="Rendulic S."/>
            <person name="Jagtap P."/>
            <person name="Rosinus A."/>
            <person name="Eppinger M."/>
            <person name="Baar C."/>
            <person name="Lanz C."/>
            <person name="Keller H."/>
            <person name="Lambert C."/>
            <person name="Evans K.J."/>
            <person name="Goesmann A."/>
            <person name="Meyer F."/>
            <person name="Sockett R.E."/>
            <person name="Schuster S.C."/>
        </authorList>
    </citation>
    <scope>NUCLEOTIDE SEQUENCE [LARGE SCALE GENOMIC DNA]</scope>
    <source>
        <strain>ATCC 15356 / DSM 50701 / NCIMB 9529 / HD100</strain>
    </source>
</reference>
<evidence type="ECO:0000255" key="1">
    <source>
        <dbReference type="HAMAP-Rule" id="MF_00054"/>
    </source>
</evidence>
<feature type="chain" id="PRO_0000091076" description="Elongation factor G 2">
    <location>
        <begin position="1"/>
        <end position="702"/>
    </location>
</feature>
<feature type="domain" description="tr-type G">
    <location>
        <begin position="8"/>
        <end position="285"/>
    </location>
</feature>
<feature type="binding site" evidence="1">
    <location>
        <begin position="17"/>
        <end position="24"/>
    </location>
    <ligand>
        <name>GTP</name>
        <dbReference type="ChEBI" id="CHEBI:37565"/>
    </ligand>
</feature>
<feature type="binding site" evidence="1">
    <location>
        <begin position="84"/>
        <end position="88"/>
    </location>
    <ligand>
        <name>GTP</name>
        <dbReference type="ChEBI" id="CHEBI:37565"/>
    </ligand>
</feature>
<feature type="binding site" evidence="1">
    <location>
        <begin position="138"/>
        <end position="141"/>
    </location>
    <ligand>
        <name>GTP</name>
        <dbReference type="ChEBI" id="CHEBI:37565"/>
    </ligand>
</feature>
<sequence>MSKKWNIDMVRNIGISAHIDSGKTTTSERILFYGGRIHAIHEVRGKDGVGATMDSMDLEREKGITIQSAATQVQWKDYTINLIDTPGHVDFTVEVERSLRVLDGAILLLCGVAGVQSQSITVDRQMKRYNVPRLAFVNKLDRQGANPYRVTDALIEKLRLNAVMIQIPIGLEDQHRGHVDLTDMKAYINQGESGENVLVEEIPADLVETAKKYRQIMIGKLADVDSAIEEKFLMEEEPTTEEIRAAIRKGTIGLKLVPVLCGSAFKNKGVQRLMDAVTYYLPSPAEKKEQALDITKNEEKFDLHPDPTKPLVALAFKLQETPFGQLTYMRVYQGKMGKGDFIVNQVNKKSVKIPRLVRMHSDKMEDIDVSYAGDIVALFGIDCASGDTFCDENIQASMQSMHVPDSVISLAIAPKDKTAANNFSKALQKFRKEDPTFRVHRDEESNETIISGMGELHLEIYVERMKREFNCEVIVGQPQVAYRETISVEAPYDYTHKKQTGGSGQYAKIVGKIQPLPPQEDGAVFKFENKVVGGRIPKEFIPAVEEGFKEQTVKGPLIGFPIVGVEVVLEDGAYHDVDSSYMAFKIAGMAALREVYASAKPTVLEPIMKLETTVPDEYQGSAVGQINQRRGSIVATTAFEGNCVIEAEVPLTEMFGYSTDLRSATKGKGEFSMEFAKYAPVPRNIQEELAKKYQAKRAAEQK</sequence>
<accession>Q6MP77</accession>
<keyword id="KW-0963">Cytoplasm</keyword>
<keyword id="KW-0251">Elongation factor</keyword>
<keyword id="KW-0342">GTP-binding</keyword>
<keyword id="KW-0547">Nucleotide-binding</keyword>
<keyword id="KW-0648">Protein biosynthesis</keyword>
<keyword id="KW-1185">Reference proteome</keyword>
<comment type="function">
    <text evidence="1">Catalyzes the GTP-dependent ribosomal translocation step during translation elongation. During this step, the ribosome changes from the pre-translocational (PRE) to the post-translocational (POST) state as the newly formed A-site-bound peptidyl-tRNA and P-site-bound deacylated tRNA move to the P and E sites, respectively. Catalyzes the coordinated movement of the two tRNA molecules, the mRNA and conformational changes in the ribosome.</text>
</comment>
<comment type="subcellular location">
    <subcellularLocation>
        <location evidence="1">Cytoplasm</location>
    </subcellularLocation>
</comment>
<comment type="similarity">
    <text evidence="1">Belongs to the TRAFAC class translation factor GTPase superfamily. Classic translation factor GTPase family. EF-G/EF-2 subfamily.</text>
</comment>
<protein>
    <recommendedName>
        <fullName evidence="1">Elongation factor G 2</fullName>
        <shortName evidence="1">EF-G 2</shortName>
    </recommendedName>
</protein>
<name>EFG2_BDEBA</name>